<evidence type="ECO:0000269" key="1">
    <source>
    </source>
</evidence>
<evidence type="ECO:0000269" key="2">
    <source>
    </source>
</evidence>
<evidence type="ECO:0000303" key="3">
    <source>
    </source>
</evidence>
<evidence type="ECO:0000312" key="4">
    <source>
        <dbReference type="EMBL" id="SOX90544.1"/>
    </source>
</evidence>
<sequence>MPNWLKKQMQKAFLEKDNYQIKLLNQCWYFYRKKHCS</sequence>
<organism>
    <name type="scientific">Bacillus subtilis (strain 168)</name>
    <dbReference type="NCBI Taxonomy" id="224308"/>
    <lineage>
        <taxon>Bacteria</taxon>
        <taxon>Bacillati</taxon>
        <taxon>Bacillota</taxon>
        <taxon>Bacilli</taxon>
        <taxon>Bacillales</taxon>
        <taxon>Bacillaceae</taxon>
        <taxon>Bacillus</taxon>
    </lineage>
</organism>
<proteinExistence type="evidence at protein level"/>
<reference key="1">
    <citation type="journal article" date="1997" name="Nature">
        <title>The complete genome sequence of the Gram-positive bacterium Bacillus subtilis.</title>
        <authorList>
            <person name="Kunst F."/>
            <person name="Ogasawara N."/>
            <person name="Moszer I."/>
            <person name="Albertini A.M."/>
            <person name="Alloni G."/>
            <person name="Azevedo V."/>
            <person name="Bertero M.G."/>
            <person name="Bessieres P."/>
            <person name="Bolotin A."/>
            <person name="Borchert S."/>
            <person name="Borriss R."/>
            <person name="Boursier L."/>
            <person name="Brans A."/>
            <person name="Braun M."/>
            <person name="Brignell S.C."/>
            <person name="Bron S."/>
            <person name="Brouillet S."/>
            <person name="Bruschi C.V."/>
            <person name="Caldwell B."/>
            <person name="Capuano V."/>
            <person name="Carter N.M."/>
            <person name="Choi S.-K."/>
            <person name="Codani J.-J."/>
            <person name="Connerton I.F."/>
            <person name="Cummings N.J."/>
            <person name="Daniel R.A."/>
            <person name="Denizot F."/>
            <person name="Devine K.M."/>
            <person name="Duesterhoeft A."/>
            <person name="Ehrlich S.D."/>
            <person name="Emmerson P.T."/>
            <person name="Entian K.-D."/>
            <person name="Errington J."/>
            <person name="Fabret C."/>
            <person name="Ferrari E."/>
            <person name="Foulger D."/>
            <person name="Fritz C."/>
            <person name="Fujita M."/>
            <person name="Fujita Y."/>
            <person name="Fuma S."/>
            <person name="Galizzi A."/>
            <person name="Galleron N."/>
            <person name="Ghim S.-Y."/>
            <person name="Glaser P."/>
            <person name="Goffeau A."/>
            <person name="Golightly E.J."/>
            <person name="Grandi G."/>
            <person name="Guiseppi G."/>
            <person name="Guy B.J."/>
            <person name="Haga K."/>
            <person name="Haiech J."/>
            <person name="Harwood C.R."/>
            <person name="Henaut A."/>
            <person name="Hilbert H."/>
            <person name="Holsappel S."/>
            <person name="Hosono S."/>
            <person name="Hullo M.-F."/>
            <person name="Itaya M."/>
            <person name="Jones L.-M."/>
            <person name="Joris B."/>
            <person name="Karamata D."/>
            <person name="Kasahara Y."/>
            <person name="Klaerr-Blanchard M."/>
            <person name="Klein C."/>
            <person name="Kobayashi Y."/>
            <person name="Koetter P."/>
            <person name="Koningstein G."/>
            <person name="Krogh S."/>
            <person name="Kumano M."/>
            <person name="Kurita K."/>
            <person name="Lapidus A."/>
            <person name="Lardinois S."/>
            <person name="Lauber J."/>
            <person name="Lazarevic V."/>
            <person name="Lee S.-M."/>
            <person name="Levine A."/>
            <person name="Liu H."/>
            <person name="Masuda S."/>
            <person name="Mauel C."/>
            <person name="Medigue C."/>
            <person name="Medina N."/>
            <person name="Mellado R.P."/>
            <person name="Mizuno M."/>
            <person name="Moestl D."/>
            <person name="Nakai S."/>
            <person name="Noback M."/>
            <person name="Noone D."/>
            <person name="O'Reilly M."/>
            <person name="Ogawa K."/>
            <person name="Ogiwara A."/>
            <person name="Oudega B."/>
            <person name="Park S.-H."/>
            <person name="Parro V."/>
            <person name="Pohl T.M."/>
            <person name="Portetelle D."/>
            <person name="Porwollik S."/>
            <person name="Prescott A.M."/>
            <person name="Presecan E."/>
            <person name="Pujic P."/>
            <person name="Purnelle B."/>
            <person name="Rapoport G."/>
            <person name="Rey M."/>
            <person name="Reynolds S."/>
            <person name="Rieger M."/>
            <person name="Rivolta C."/>
            <person name="Rocha E."/>
            <person name="Roche B."/>
            <person name="Rose M."/>
            <person name="Sadaie Y."/>
            <person name="Sato T."/>
            <person name="Scanlan E."/>
            <person name="Schleich S."/>
            <person name="Schroeter R."/>
            <person name="Scoffone F."/>
            <person name="Sekiguchi J."/>
            <person name="Sekowska A."/>
            <person name="Seror S.J."/>
            <person name="Serror P."/>
            <person name="Shin B.-S."/>
            <person name="Soldo B."/>
            <person name="Sorokin A."/>
            <person name="Tacconi E."/>
            <person name="Takagi T."/>
            <person name="Takahashi H."/>
            <person name="Takemaru K."/>
            <person name="Takeuchi M."/>
            <person name="Tamakoshi A."/>
            <person name="Tanaka T."/>
            <person name="Terpstra P."/>
            <person name="Tognoni A."/>
            <person name="Tosato V."/>
            <person name="Uchiyama S."/>
            <person name="Vandenbol M."/>
            <person name="Vannier F."/>
            <person name="Vassarotti A."/>
            <person name="Viari A."/>
            <person name="Wambutt R."/>
            <person name="Wedler E."/>
            <person name="Wedler H."/>
            <person name="Weitzenegger T."/>
            <person name="Winters P."/>
            <person name="Wipat A."/>
            <person name="Yamamoto H."/>
            <person name="Yamane K."/>
            <person name="Yasumoto K."/>
            <person name="Yata K."/>
            <person name="Yoshida K."/>
            <person name="Yoshikawa H.-F."/>
            <person name="Zumstein E."/>
            <person name="Yoshikawa H."/>
            <person name="Danchin A."/>
        </authorList>
    </citation>
    <scope>NUCLEOTIDE SEQUENCE [LARGE SCALE GENOMIC DNA]</scope>
    <source>
        <strain>168</strain>
    </source>
</reference>
<reference key="2">
    <citation type="journal article" date="2018" name="Microb. Biotechnol.">
        <title>Bacillus subtilis, the model Gram-positive bacterium: 20 years of annotation refinement.</title>
        <authorList>
            <person name="Borriss R."/>
            <person name="Danchin A."/>
            <person name="Harwood C.R."/>
            <person name="Medigue C."/>
            <person name="Rocha E.P.C."/>
            <person name="Sekowska A."/>
            <person name="Vallenet D."/>
        </authorList>
    </citation>
    <scope>NUCLEOTIDE SEQUENCE [LARGE SCALE GENOMIC DNA]</scope>
    <source>
        <strain>168</strain>
    </source>
</reference>
<reference key="3">
    <citation type="journal article" date="2012" name="Mol. Microbiol.">
        <title>Small proteins link coat and cortex assembly during sporulation in Bacillus subtilis.</title>
        <authorList>
            <person name="Ebmeier S.E."/>
            <person name="Tan I.S."/>
            <person name="Clapham K.R."/>
            <person name="Ramamurthi K.S."/>
        </authorList>
    </citation>
    <scope>IDENTIFICATION</scope>
    <scope>FUNCTION</scope>
    <scope>SUBCELLULAR LOCATION</scope>
    <scope>INDUCTION</scope>
    <scope>DISRUPTION PHENOTYPE</scope>
</reference>
<reference key="4">
    <citation type="journal article" date="2015" name="Dev. Cell">
        <title>A quality-control mechanism removes unfit cells from a population of sporulating bacteria.</title>
        <authorList>
            <person name="Tan I.S."/>
            <person name="Weiss C.A."/>
            <person name="Popham D.L."/>
            <person name="Ramamurthi K.S."/>
        </authorList>
    </citation>
    <scope>FUNCTION IN QUALITY-CONTROL</scope>
    <scope>SUBUNIT</scope>
    <scope>SUBCELLULAR LOCATION</scope>
    <scope>OVEREXPRESSION</scope>
    <scope>MUTAGENESIS OF PRO-2</scope>
</reference>
<protein>
    <recommendedName>
        <fullName evidence="3">Cortex morphogenetic protein A</fullName>
    </recommendedName>
</protein>
<accession>A0A2K4Z9G8</accession>
<keyword id="KW-1185">Reference proteome</keyword>
<keyword id="KW-0749">Sporulation</keyword>
<feature type="chain" id="PRO_0000444603" description="Cortex morphogenetic protein A">
    <location>
        <begin position="1"/>
        <end position="37"/>
    </location>
</feature>
<feature type="mutagenesis site" description="Abolishes formation of the complex with SpoIVA and ClpX." evidence="2">
    <original>P</original>
    <variation>A</variation>
    <location>
        <position position="2"/>
    </location>
</feature>
<comment type="function">
    <text evidence="1 2">Ensures proper spore envelope assembly (PubMed:22463703, PubMed:26387458). Represses premature cortex assembly until coat assembly successfully initiates (PubMed:22463703). Also participates in a quality-control pathway that selectively removes defective sporulating cells through regulated cell death. Acts as an adaptator that delivers SpoIVA to the ClpXP proteolytic machinery for degradation, specifically in cells that improperly assemble the spore envelope (PubMed:26387458).</text>
</comment>
<comment type="subunit">
    <text evidence="2">Can form a complex with SpoIVA and ClpX.</text>
</comment>
<comment type="subcellular location">
    <subcellularLocation>
        <location evidence="1">Forespore</location>
    </subcellularLocation>
    <text evidence="1 2">Localizes to the surface of the forespore early during sporulation, while coat assembly is initiating (PubMed:22463703). Localization is dependent on SpoIVA (PubMed:26387458). Proper localization may also depend directly or indirectly on the presence of SpoVM (PubMed:22463703).</text>
</comment>
<comment type="induction">
    <text evidence="1">Expressed during sporulation and is regulated by the mother cell-specific transcription factors sigma E and SpoIIID.</text>
</comment>
<comment type="disruption phenotype">
    <text evidence="1">Deletion mutants produce heat-resistant spores more quickly than wild-type cells, but are sensitive to lysozyme.</text>
</comment>
<comment type="miscellaneous">
    <text evidence="2">Overexpression causes defects in cortex maintenance and cell lysis.</text>
</comment>
<name>COMPA_BACSU</name>
<dbReference type="EMBL" id="AL009126">
    <property type="protein sequence ID" value="SOX90544.1"/>
    <property type="molecule type" value="Genomic_DNA"/>
</dbReference>
<dbReference type="RefSeq" id="WP_003225207.1">
    <property type="nucleotide sequence ID" value="NZ_OZ025638.1"/>
</dbReference>
<dbReference type="RefSeq" id="YP_009513946.1">
    <property type="nucleotide sequence ID" value="NC_000964.3"/>
</dbReference>
<dbReference type="SMR" id="A0A2K4Z9G8"/>
<dbReference type="EnsemblBacteria" id="SOX90544">
    <property type="protein sequence ID" value="SOX90544"/>
    <property type="gene ID" value="BSU_04785"/>
</dbReference>
<dbReference type="GeneID" id="37862802"/>
<dbReference type="GeneID" id="92915671"/>
<dbReference type="InParanoid" id="A0A2K4Z9G8"/>
<dbReference type="OrthoDB" id="2691694at2"/>
<dbReference type="BioCyc" id="BSUB:MONOMER8J2-49"/>
<dbReference type="Proteomes" id="UP000001570">
    <property type="component" value="Chromosome"/>
</dbReference>
<dbReference type="GO" id="GO:0042763">
    <property type="term" value="C:intracellular immature spore"/>
    <property type="evidence" value="ECO:0007669"/>
    <property type="project" value="UniProtKB-SubCell"/>
</dbReference>
<dbReference type="GO" id="GO:0030435">
    <property type="term" value="P:sporulation resulting in formation of a cellular spore"/>
    <property type="evidence" value="ECO:0007669"/>
    <property type="project" value="UniProtKB-KW"/>
</dbReference>
<dbReference type="InterPro" id="IPR047764">
    <property type="entry name" value="CmpA"/>
</dbReference>
<dbReference type="NCBIfam" id="NF033225">
    <property type="entry name" value="spore_CmpA"/>
    <property type="match status" value="1"/>
</dbReference>
<gene>
    <name evidence="3" type="primary">cmpA</name>
    <name evidence="4" type="ordered locus">BSU_04785</name>
</gene>